<proteinExistence type="inferred from homology"/>
<sequence>MISAKEVEDAYDLLKAVVTKTPLQLDPYLSNKYQANIYLKEENLQKVRSFKLRGAYYSISKLSDEQRSKGVVCASAGNHAQGVAFAANQLNISATIFMPVTTPNQKISQVKFFGESHVTIRLIGDTFDESARAAKAFSQDNDKPFIDPFDDENVIAGQGTVALEIFAQAKKQGISLDKIFVQIGGGGLIAGITAYSKERYPQTEIIGVEAKGATSMKAAYSAGQPVTLEHIDKFADGIAVATVGQKTYQLINDKVKQLLAVDEGLISQTILELYSKLGIVAEPAGATSVAALELIKDEIKGKNIVCIISGGNNDISRMQEIEERALVYEGLKHYFVINFPQRPGALRTFVSDILGPNDDITRFEYIKRADKGKGPCLVGILLSDASDYDSLIDRIERFDNRYVNLHGNDSLYELLV</sequence>
<accession>Q02145</accession>
<accession>O34132</accession>
<accession>Q9CG81</accession>
<evidence type="ECO:0000250" key="1"/>
<evidence type="ECO:0000255" key="2">
    <source>
        <dbReference type="PROSITE-ProRule" id="PRU01008"/>
    </source>
</evidence>
<evidence type="ECO:0000305" key="3"/>
<name>ILVA_LACLA</name>
<reference key="1">
    <citation type="journal article" date="1992" name="J. Bacteriol.">
        <title>Branched-chain amino acid biosynthesis genes in Lactococcus lactis subsp. lactis.</title>
        <authorList>
            <person name="Godon J.-J."/>
            <person name="Chopin M.-C."/>
            <person name="Ehrlich S.D."/>
        </authorList>
    </citation>
    <scope>NUCLEOTIDE SEQUENCE [GENOMIC DNA]</scope>
    <source>
        <strain>NCDO 2118</strain>
    </source>
</reference>
<reference key="2">
    <citation type="submission" date="1997-11" db="EMBL/GenBank/DDBJ databases">
        <authorList>
            <person name="Delorme C."/>
            <person name="Goupil-Feuillerat N."/>
            <person name="Godon J.-J."/>
            <person name="Ehrlich S.D."/>
            <person name="Renault P."/>
        </authorList>
    </citation>
    <scope>SEQUENCE REVISION</scope>
</reference>
<reference key="3">
    <citation type="journal article" date="2001" name="Genome Res.">
        <title>The complete genome sequence of the lactic acid bacterium Lactococcus lactis ssp. lactis IL1403.</title>
        <authorList>
            <person name="Bolotin A."/>
            <person name="Wincker P."/>
            <person name="Mauger S."/>
            <person name="Jaillon O."/>
            <person name="Malarme K."/>
            <person name="Weissenbach J."/>
            <person name="Ehrlich S.D."/>
            <person name="Sorokin A."/>
        </authorList>
    </citation>
    <scope>NUCLEOTIDE SEQUENCE [LARGE SCALE GENOMIC DNA]</scope>
    <source>
        <strain>IL1403</strain>
    </source>
</reference>
<feature type="chain" id="PRO_0000185575" description="L-threonine dehydratase biosynthetic IlvA">
    <location>
        <begin position="1"/>
        <end position="416"/>
    </location>
</feature>
<feature type="domain" description="ACT-like" evidence="2">
    <location>
        <begin position="333"/>
        <end position="407"/>
    </location>
</feature>
<feature type="binding site" evidence="1">
    <location>
        <position position="78"/>
    </location>
    <ligand>
        <name>pyridoxal 5'-phosphate</name>
        <dbReference type="ChEBI" id="CHEBI:597326"/>
    </ligand>
</feature>
<feature type="binding site" evidence="1">
    <location>
        <begin position="184"/>
        <end position="188"/>
    </location>
    <ligand>
        <name>pyridoxal 5'-phosphate</name>
        <dbReference type="ChEBI" id="CHEBI:597326"/>
    </ligand>
</feature>
<feature type="binding site" evidence="1">
    <location>
        <position position="309"/>
    </location>
    <ligand>
        <name>pyridoxal 5'-phosphate</name>
        <dbReference type="ChEBI" id="CHEBI:597326"/>
    </ligand>
</feature>
<feature type="modified residue" description="N6-(pyridoxal phosphate)lysine" evidence="1">
    <location>
        <position position="51"/>
    </location>
</feature>
<feature type="sequence conflict" description="In Ref. 1; AAB81922." evidence="3" ref="1">
    <original>A</original>
    <variation>S</variation>
    <location>
        <position position="345"/>
    </location>
</feature>
<feature type="sequence conflict" description="In Ref. 1; AAB81922." evidence="3" ref="1">
    <original>D</original>
    <variation>N</variation>
    <location>
        <position position="393"/>
    </location>
</feature>
<feature type="sequence conflict" description="In Ref. 1; AAB81922." evidence="3" ref="1">
    <original>H</original>
    <variation>R</variation>
    <location>
        <position position="406"/>
    </location>
</feature>
<dbReference type="EC" id="4.3.1.19"/>
<dbReference type="EMBL" id="U92974">
    <property type="protein sequence ID" value="AAB81922.1"/>
    <property type="molecule type" value="Genomic_DNA"/>
</dbReference>
<dbReference type="EMBL" id="AE005176">
    <property type="protein sequence ID" value="AAK05325.1"/>
    <property type="molecule type" value="Genomic_DNA"/>
</dbReference>
<dbReference type="PIR" id="C86778">
    <property type="entry name" value="C86778"/>
</dbReference>
<dbReference type="PIR" id="S35141">
    <property type="entry name" value="S35141"/>
</dbReference>
<dbReference type="RefSeq" id="NP_267383.1">
    <property type="nucleotide sequence ID" value="NC_002662.1"/>
</dbReference>
<dbReference type="RefSeq" id="WP_010905840.1">
    <property type="nucleotide sequence ID" value="NC_002662.1"/>
</dbReference>
<dbReference type="SMR" id="Q02145"/>
<dbReference type="PaxDb" id="272623-L0081"/>
<dbReference type="EnsemblBacteria" id="AAK05325">
    <property type="protein sequence ID" value="AAK05325"/>
    <property type="gene ID" value="L0081"/>
</dbReference>
<dbReference type="KEGG" id="lla:L0081"/>
<dbReference type="PATRIC" id="fig|272623.7.peg.1326"/>
<dbReference type="eggNOG" id="COG1171">
    <property type="taxonomic scope" value="Bacteria"/>
</dbReference>
<dbReference type="HOGENOM" id="CLU_021152_4_2_9"/>
<dbReference type="OrthoDB" id="9811476at2"/>
<dbReference type="UniPathway" id="UPA00047">
    <property type="reaction ID" value="UER00054"/>
</dbReference>
<dbReference type="Proteomes" id="UP000002196">
    <property type="component" value="Chromosome"/>
</dbReference>
<dbReference type="GO" id="GO:0003941">
    <property type="term" value="F:L-serine ammonia-lyase activity"/>
    <property type="evidence" value="ECO:0007669"/>
    <property type="project" value="TreeGrafter"/>
</dbReference>
<dbReference type="GO" id="GO:0030170">
    <property type="term" value="F:pyridoxal phosphate binding"/>
    <property type="evidence" value="ECO:0007669"/>
    <property type="project" value="InterPro"/>
</dbReference>
<dbReference type="GO" id="GO:0004794">
    <property type="term" value="F:threonine deaminase activity"/>
    <property type="evidence" value="ECO:0007669"/>
    <property type="project" value="UniProtKB-EC"/>
</dbReference>
<dbReference type="GO" id="GO:0009097">
    <property type="term" value="P:isoleucine biosynthetic process"/>
    <property type="evidence" value="ECO:0007669"/>
    <property type="project" value="UniProtKB-UniPathway"/>
</dbReference>
<dbReference type="GO" id="GO:0006565">
    <property type="term" value="P:L-serine catabolic process"/>
    <property type="evidence" value="ECO:0007669"/>
    <property type="project" value="TreeGrafter"/>
</dbReference>
<dbReference type="GO" id="GO:0006567">
    <property type="term" value="P:threonine catabolic process"/>
    <property type="evidence" value="ECO:0007669"/>
    <property type="project" value="TreeGrafter"/>
</dbReference>
<dbReference type="GO" id="GO:0006566">
    <property type="term" value="P:threonine metabolic process"/>
    <property type="evidence" value="ECO:0000250"/>
    <property type="project" value="UniProtKB"/>
</dbReference>
<dbReference type="CDD" id="cd01562">
    <property type="entry name" value="Thr-dehyd"/>
    <property type="match status" value="1"/>
</dbReference>
<dbReference type="FunFam" id="3.40.50.1100:FF:000005">
    <property type="entry name" value="Threonine dehydratase catabolic"/>
    <property type="match status" value="1"/>
</dbReference>
<dbReference type="Gene3D" id="3.40.50.1100">
    <property type="match status" value="2"/>
</dbReference>
<dbReference type="InterPro" id="IPR045865">
    <property type="entry name" value="ACT-like_dom_sf"/>
</dbReference>
<dbReference type="InterPro" id="IPR011820">
    <property type="entry name" value="IlvA"/>
</dbReference>
<dbReference type="InterPro" id="IPR050147">
    <property type="entry name" value="Ser/Thr_Dehydratase"/>
</dbReference>
<dbReference type="InterPro" id="IPR000634">
    <property type="entry name" value="Ser/Thr_deHydtase_PyrdxlP-BS"/>
</dbReference>
<dbReference type="InterPro" id="IPR001721">
    <property type="entry name" value="TD_ACT-like"/>
</dbReference>
<dbReference type="InterPro" id="IPR001926">
    <property type="entry name" value="TrpB-like_PALP"/>
</dbReference>
<dbReference type="InterPro" id="IPR036052">
    <property type="entry name" value="TrpB-like_PALP_sf"/>
</dbReference>
<dbReference type="NCBIfam" id="NF006390">
    <property type="entry name" value="PRK08639.1"/>
    <property type="match status" value="1"/>
</dbReference>
<dbReference type="NCBIfam" id="TIGR02079">
    <property type="entry name" value="THD1"/>
    <property type="match status" value="1"/>
</dbReference>
<dbReference type="PANTHER" id="PTHR48078:SF11">
    <property type="entry name" value="THREONINE DEHYDRATASE, MITOCHONDRIAL"/>
    <property type="match status" value="1"/>
</dbReference>
<dbReference type="PANTHER" id="PTHR48078">
    <property type="entry name" value="THREONINE DEHYDRATASE, MITOCHONDRIAL-RELATED"/>
    <property type="match status" value="1"/>
</dbReference>
<dbReference type="Pfam" id="PF00291">
    <property type="entry name" value="PALP"/>
    <property type="match status" value="1"/>
</dbReference>
<dbReference type="Pfam" id="PF00585">
    <property type="entry name" value="Thr_dehydrat_C"/>
    <property type="match status" value="1"/>
</dbReference>
<dbReference type="SUPFAM" id="SSF55021">
    <property type="entry name" value="ACT-like"/>
    <property type="match status" value="1"/>
</dbReference>
<dbReference type="SUPFAM" id="SSF53686">
    <property type="entry name" value="Tryptophan synthase beta subunit-like PLP-dependent enzymes"/>
    <property type="match status" value="1"/>
</dbReference>
<dbReference type="PROSITE" id="PS51672">
    <property type="entry name" value="ACT_LIKE"/>
    <property type="match status" value="1"/>
</dbReference>
<dbReference type="PROSITE" id="PS00165">
    <property type="entry name" value="DEHYDRATASE_SER_THR"/>
    <property type="match status" value="1"/>
</dbReference>
<comment type="function">
    <text evidence="1">Catalyzes the anaerobic formation of alpha-ketobutyrate and ammonia from threonine in a two-step reaction. The first step involved a dehydration of threonine and a production of enamine intermediates (aminocrotonate), which tautomerizes to its imine form (iminobutyrate). Both intermediates are unstable and short-lived. The second step is the nonenzymatic hydrolysis of the enamine/imine intermediates to form 2-ketobutyrate and free ammonia. In the low water environment of the cell, the second step is accelerated by RidA (By similarity).</text>
</comment>
<comment type="catalytic activity">
    <reaction>
        <text>L-threonine = 2-oxobutanoate + NH4(+)</text>
        <dbReference type="Rhea" id="RHEA:22108"/>
        <dbReference type="ChEBI" id="CHEBI:16763"/>
        <dbReference type="ChEBI" id="CHEBI:28938"/>
        <dbReference type="ChEBI" id="CHEBI:57926"/>
        <dbReference type="EC" id="4.3.1.19"/>
    </reaction>
</comment>
<comment type="cofactor">
    <cofactor evidence="1">
        <name>pyridoxal 5'-phosphate</name>
        <dbReference type="ChEBI" id="CHEBI:597326"/>
    </cofactor>
</comment>
<comment type="pathway">
    <text>Amino-acid biosynthesis; L-isoleucine biosynthesis; 2-oxobutanoate from L-threonine: step 1/1.</text>
</comment>
<comment type="subunit">
    <text evidence="1">Homotetramer.</text>
</comment>
<comment type="similarity">
    <text evidence="3">Belongs to the serine/threonine dehydratase family.</text>
</comment>
<gene>
    <name type="primary">ilvA</name>
    <name type="ordered locus">LL1227</name>
    <name type="ORF">L0081</name>
</gene>
<protein>
    <recommendedName>
        <fullName>L-threonine dehydratase biosynthetic IlvA</fullName>
        <ecNumber>4.3.1.19</ecNumber>
    </recommendedName>
    <alternativeName>
        <fullName>Threonine deaminase</fullName>
    </alternativeName>
</protein>
<keyword id="KW-0028">Amino-acid biosynthesis</keyword>
<keyword id="KW-0100">Branched-chain amino acid biosynthesis</keyword>
<keyword id="KW-0412">Isoleucine biosynthesis</keyword>
<keyword id="KW-0456">Lyase</keyword>
<keyword id="KW-0663">Pyridoxal phosphate</keyword>
<keyword id="KW-1185">Reference proteome</keyword>
<organism>
    <name type="scientific">Lactococcus lactis subsp. lactis (strain IL1403)</name>
    <name type="common">Streptococcus lactis</name>
    <dbReference type="NCBI Taxonomy" id="272623"/>
    <lineage>
        <taxon>Bacteria</taxon>
        <taxon>Bacillati</taxon>
        <taxon>Bacillota</taxon>
        <taxon>Bacilli</taxon>
        <taxon>Lactobacillales</taxon>
        <taxon>Streptococcaceae</taxon>
        <taxon>Lactococcus</taxon>
    </lineage>
</organism>